<dbReference type="EC" id="1.1.1.27" evidence="2"/>
<dbReference type="EMBL" id="BA000034">
    <property type="protein sequence ID" value="BAC64103.1"/>
    <property type="molecule type" value="Genomic_DNA"/>
</dbReference>
<dbReference type="RefSeq" id="WP_002984645.1">
    <property type="nucleotide sequence ID" value="NC_004606.1"/>
</dbReference>
<dbReference type="SMR" id="P0DC19"/>
<dbReference type="KEGG" id="sps:SPs1008"/>
<dbReference type="HOGENOM" id="CLU_045401_1_1_9"/>
<dbReference type="UniPathway" id="UPA00554">
    <property type="reaction ID" value="UER00611"/>
</dbReference>
<dbReference type="GO" id="GO:0005737">
    <property type="term" value="C:cytoplasm"/>
    <property type="evidence" value="ECO:0007669"/>
    <property type="project" value="UniProtKB-SubCell"/>
</dbReference>
<dbReference type="GO" id="GO:0004459">
    <property type="term" value="F:L-lactate dehydrogenase activity"/>
    <property type="evidence" value="ECO:0007669"/>
    <property type="project" value="UniProtKB-UniRule"/>
</dbReference>
<dbReference type="GO" id="GO:0006096">
    <property type="term" value="P:glycolytic process"/>
    <property type="evidence" value="ECO:0007669"/>
    <property type="project" value="UniProtKB-UniRule"/>
</dbReference>
<dbReference type="GO" id="GO:0006089">
    <property type="term" value="P:lactate metabolic process"/>
    <property type="evidence" value="ECO:0007669"/>
    <property type="project" value="TreeGrafter"/>
</dbReference>
<dbReference type="CDD" id="cd05291">
    <property type="entry name" value="HicDH_like"/>
    <property type="match status" value="1"/>
</dbReference>
<dbReference type="FunFam" id="3.40.50.720:FF:000018">
    <property type="entry name" value="Malate dehydrogenase"/>
    <property type="match status" value="1"/>
</dbReference>
<dbReference type="Gene3D" id="3.90.110.10">
    <property type="entry name" value="Lactate dehydrogenase/glycoside hydrolase, family 4, C-terminal"/>
    <property type="match status" value="1"/>
</dbReference>
<dbReference type="Gene3D" id="3.40.50.720">
    <property type="entry name" value="NAD(P)-binding Rossmann-like Domain"/>
    <property type="match status" value="1"/>
</dbReference>
<dbReference type="HAMAP" id="MF_00488">
    <property type="entry name" value="Lactate_dehydrog"/>
    <property type="match status" value="1"/>
</dbReference>
<dbReference type="InterPro" id="IPR001557">
    <property type="entry name" value="L-lactate/malate_DH"/>
</dbReference>
<dbReference type="InterPro" id="IPR011304">
    <property type="entry name" value="L-lactate_DH"/>
</dbReference>
<dbReference type="InterPro" id="IPR018177">
    <property type="entry name" value="L-lactate_DH_AS"/>
</dbReference>
<dbReference type="InterPro" id="IPR022383">
    <property type="entry name" value="Lactate/malate_DH_C"/>
</dbReference>
<dbReference type="InterPro" id="IPR001236">
    <property type="entry name" value="Lactate/malate_DH_N"/>
</dbReference>
<dbReference type="InterPro" id="IPR015955">
    <property type="entry name" value="Lactate_DH/Glyco_Ohase_4_C"/>
</dbReference>
<dbReference type="InterPro" id="IPR036291">
    <property type="entry name" value="NAD(P)-bd_dom_sf"/>
</dbReference>
<dbReference type="NCBIfam" id="TIGR01771">
    <property type="entry name" value="L-LDH-NAD"/>
    <property type="match status" value="1"/>
</dbReference>
<dbReference type="NCBIfam" id="NF000824">
    <property type="entry name" value="PRK00066.1"/>
    <property type="match status" value="1"/>
</dbReference>
<dbReference type="PANTHER" id="PTHR43128">
    <property type="entry name" value="L-2-HYDROXYCARBOXYLATE DEHYDROGENASE (NAD(P)(+))"/>
    <property type="match status" value="1"/>
</dbReference>
<dbReference type="PANTHER" id="PTHR43128:SF16">
    <property type="entry name" value="L-LACTATE DEHYDROGENASE"/>
    <property type="match status" value="1"/>
</dbReference>
<dbReference type="Pfam" id="PF02866">
    <property type="entry name" value="Ldh_1_C"/>
    <property type="match status" value="1"/>
</dbReference>
<dbReference type="Pfam" id="PF00056">
    <property type="entry name" value="Ldh_1_N"/>
    <property type="match status" value="1"/>
</dbReference>
<dbReference type="PIRSF" id="PIRSF000102">
    <property type="entry name" value="Lac_mal_DH"/>
    <property type="match status" value="1"/>
</dbReference>
<dbReference type="PRINTS" id="PR00086">
    <property type="entry name" value="LLDHDRGNASE"/>
</dbReference>
<dbReference type="SUPFAM" id="SSF56327">
    <property type="entry name" value="LDH C-terminal domain-like"/>
    <property type="match status" value="1"/>
</dbReference>
<dbReference type="SUPFAM" id="SSF51735">
    <property type="entry name" value="NAD(P)-binding Rossmann-fold domains"/>
    <property type="match status" value="1"/>
</dbReference>
<dbReference type="PROSITE" id="PS00064">
    <property type="entry name" value="L_LDH"/>
    <property type="match status" value="1"/>
</dbReference>
<feature type="initiator methionine" description="Removed" evidence="1">
    <location>
        <position position="1"/>
    </location>
</feature>
<feature type="chain" id="PRO_0000411397" description="L-lactate dehydrogenase">
    <location>
        <begin position="2"/>
        <end position="327"/>
    </location>
</feature>
<feature type="active site" description="Proton acceptor" evidence="2">
    <location>
        <position position="179"/>
    </location>
</feature>
<feature type="binding site" evidence="2">
    <location>
        <position position="18"/>
    </location>
    <ligand>
        <name>NAD(+)</name>
        <dbReference type="ChEBI" id="CHEBI:57540"/>
    </ligand>
</feature>
<feature type="binding site" evidence="2">
    <location>
        <position position="39"/>
    </location>
    <ligand>
        <name>NAD(+)</name>
        <dbReference type="ChEBI" id="CHEBI:57540"/>
    </ligand>
</feature>
<feature type="binding site" evidence="2">
    <location>
        <position position="44"/>
    </location>
    <ligand>
        <name>NAD(+)</name>
        <dbReference type="ChEBI" id="CHEBI:57540"/>
    </ligand>
</feature>
<feature type="binding site" evidence="2">
    <location>
        <position position="69"/>
    </location>
    <ligand>
        <name>NAD(+)</name>
        <dbReference type="ChEBI" id="CHEBI:57540"/>
    </ligand>
</feature>
<feature type="binding site" evidence="2">
    <location>
        <begin position="83"/>
        <end position="84"/>
    </location>
    <ligand>
        <name>NAD(+)</name>
        <dbReference type="ChEBI" id="CHEBI:57540"/>
    </ligand>
</feature>
<feature type="binding site" evidence="2">
    <location>
        <position position="86"/>
    </location>
    <ligand>
        <name>substrate</name>
    </ligand>
</feature>
<feature type="binding site" evidence="2">
    <location>
        <position position="92"/>
    </location>
    <ligand>
        <name>substrate</name>
    </ligand>
</feature>
<feature type="binding site" evidence="2">
    <location>
        <begin position="122"/>
        <end position="124"/>
    </location>
    <ligand>
        <name>NAD(+)</name>
        <dbReference type="ChEBI" id="CHEBI:57540"/>
    </ligand>
</feature>
<feature type="binding site" evidence="2">
    <location>
        <begin position="124"/>
        <end position="127"/>
    </location>
    <ligand>
        <name>substrate</name>
    </ligand>
</feature>
<feature type="binding site" evidence="2">
    <location>
        <position position="147"/>
    </location>
    <ligand>
        <name>NAD(+)</name>
        <dbReference type="ChEBI" id="CHEBI:57540"/>
    </ligand>
</feature>
<feature type="binding site" evidence="2">
    <location>
        <begin position="152"/>
        <end position="155"/>
    </location>
    <ligand>
        <name>substrate</name>
    </ligand>
</feature>
<feature type="binding site" evidence="2">
    <location>
        <position position="157"/>
    </location>
    <ligand>
        <name>beta-D-fructose 1,6-bisphosphate</name>
        <dbReference type="ChEBI" id="CHEBI:32966"/>
        <note>allosteric activator</note>
    </ligand>
</feature>
<feature type="binding site" evidence="2">
    <location>
        <position position="172"/>
    </location>
    <ligand>
        <name>beta-D-fructose 1,6-bisphosphate</name>
        <dbReference type="ChEBI" id="CHEBI:32966"/>
        <note>allosteric activator</note>
    </ligand>
</feature>
<feature type="binding site" evidence="2">
    <location>
        <position position="233"/>
    </location>
    <ligand>
        <name>substrate</name>
    </ligand>
</feature>
<feature type="modified residue" description="Phosphotyrosine" evidence="2">
    <location>
        <position position="224"/>
    </location>
</feature>
<sequence>MTATKQHKKVILVGDGAVGSSYAFALVTQNIAQELGIIDIFKEKTQGDAEDLSHALAFTSPKKIYAADYSDCHDADLVVLTAGAPQKPGETRLDLVEKNLRINKEVVTQIVASGFKGIFLVAANPVDVLTYSTWKFSGFPKERVIGSGTSLDSARFRQALAAKIGVDARSVHAYIMGEHGDSEFAVWSHANVAGVGLYDWLQANRDIDEQGLVDLFISVRDAAYSIINKKGATFYGIAVALARITKAILDDENAVLPLSVFQEGQYEGVEDCYIGQPAIVGAYGIVRPVNIPLNDAELQKMQASANQLKAIIDEAFAKEEFASAAKN</sequence>
<name>LDH_STRPQ</name>
<evidence type="ECO:0000250" key="1"/>
<evidence type="ECO:0000255" key="2">
    <source>
        <dbReference type="HAMAP-Rule" id="MF_00488"/>
    </source>
</evidence>
<evidence type="ECO:0000305" key="3"/>
<keyword id="KW-0021">Allosteric enzyme</keyword>
<keyword id="KW-0963">Cytoplasm</keyword>
<keyword id="KW-0520">NAD</keyword>
<keyword id="KW-0560">Oxidoreductase</keyword>
<keyword id="KW-0597">Phosphoprotein</keyword>
<reference key="1">
    <citation type="journal article" date="2003" name="Genome Res.">
        <title>Genome sequence of an M3 strain of Streptococcus pyogenes reveals a large-scale genomic rearrangement in invasive strains and new insights into phage evolution.</title>
        <authorList>
            <person name="Nakagawa I."/>
            <person name="Kurokawa K."/>
            <person name="Yamashita A."/>
            <person name="Nakata M."/>
            <person name="Tomiyasu Y."/>
            <person name="Okahashi N."/>
            <person name="Kawabata S."/>
            <person name="Yamazaki K."/>
            <person name="Shiba T."/>
            <person name="Yasunaga T."/>
            <person name="Hayashi H."/>
            <person name="Hattori M."/>
            <person name="Hamada S."/>
        </authorList>
    </citation>
    <scope>NUCLEOTIDE SEQUENCE [LARGE SCALE GENOMIC DNA]</scope>
    <source>
        <strain>SSI-1</strain>
    </source>
</reference>
<protein>
    <recommendedName>
        <fullName evidence="2">L-lactate dehydrogenase</fullName>
        <shortName evidence="2">L-LDH</shortName>
        <ecNumber evidence="2">1.1.1.27</ecNumber>
    </recommendedName>
</protein>
<proteinExistence type="inferred from homology"/>
<gene>
    <name evidence="2" type="primary">ldh</name>
    <name type="ordered locus">SPs1008</name>
</gene>
<comment type="function">
    <text evidence="2">Catalyzes the conversion of lactate to pyruvate.</text>
</comment>
<comment type="catalytic activity">
    <reaction evidence="2">
        <text>(S)-lactate + NAD(+) = pyruvate + NADH + H(+)</text>
        <dbReference type="Rhea" id="RHEA:23444"/>
        <dbReference type="ChEBI" id="CHEBI:15361"/>
        <dbReference type="ChEBI" id="CHEBI:15378"/>
        <dbReference type="ChEBI" id="CHEBI:16651"/>
        <dbReference type="ChEBI" id="CHEBI:57540"/>
        <dbReference type="ChEBI" id="CHEBI:57945"/>
        <dbReference type="EC" id="1.1.1.27"/>
    </reaction>
</comment>
<comment type="activity regulation">
    <text evidence="2">Allosterically activated by fructose 1,6-bisphosphate (FBP).</text>
</comment>
<comment type="pathway">
    <text evidence="2">Fermentation; pyruvate fermentation to lactate; (S)-lactate from pyruvate: step 1/1.</text>
</comment>
<comment type="subunit">
    <text evidence="2">Homotetramer.</text>
</comment>
<comment type="subcellular location">
    <subcellularLocation>
        <location evidence="2">Cytoplasm</location>
    </subcellularLocation>
</comment>
<comment type="similarity">
    <text evidence="2 3">Belongs to the LDH/MDH superfamily. LDH family.</text>
</comment>
<accession>P0DC19</accession>
<accession>P65260</accession>
<accession>Q99ZN5</accession>
<organism>
    <name type="scientific">Streptococcus pyogenes serotype M3 (strain SSI-1)</name>
    <dbReference type="NCBI Taxonomy" id="193567"/>
    <lineage>
        <taxon>Bacteria</taxon>
        <taxon>Bacillati</taxon>
        <taxon>Bacillota</taxon>
        <taxon>Bacilli</taxon>
        <taxon>Lactobacillales</taxon>
        <taxon>Streptococcaceae</taxon>
        <taxon>Streptococcus</taxon>
    </lineage>
</organism>